<name>IFI5A_MOUSE</name>
<organism>
    <name type="scientific">Mus musculus</name>
    <name type="common">Mouse</name>
    <dbReference type="NCBI Taxonomy" id="10090"/>
    <lineage>
        <taxon>Eukaryota</taxon>
        <taxon>Metazoa</taxon>
        <taxon>Chordata</taxon>
        <taxon>Craniata</taxon>
        <taxon>Vertebrata</taxon>
        <taxon>Euteleostomi</taxon>
        <taxon>Mammalia</taxon>
        <taxon>Eutheria</taxon>
        <taxon>Euarchontoglires</taxon>
        <taxon>Glires</taxon>
        <taxon>Rodentia</taxon>
        <taxon>Myomorpha</taxon>
        <taxon>Muroidea</taxon>
        <taxon>Muridae</taxon>
        <taxon>Murinae</taxon>
        <taxon>Mus</taxon>
        <taxon>Mus</taxon>
    </lineage>
</organism>
<feature type="chain" id="PRO_0000334527" description="Interferon-activable protein 205-A">
    <location>
        <begin position="1"/>
        <end position="404"/>
    </location>
</feature>
<feature type="domain" description="Pyrin" evidence="2">
    <location>
        <begin position="1"/>
        <end position="88"/>
    </location>
</feature>
<feature type="domain" description="HIN-200" evidence="3">
    <location>
        <begin position="192"/>
        <end position="392"/>
    </location>
</feature>
<feature type="region of interest" description="Disordered" evidence="4">
    <location>
        <begin position="85"/>
        <end position="198"/>
    </location>
</feature>
<feature type="compositionally biased region" description="Low complexity" evidence="4">
    <location>
        <begin position="102"/>
        <end position="112"/>
    </location>
</feature>
<feature type="compositionally biased region" description="Low complexity" evidence="4">
    <location>
        <begin position="122"/>
        <end position="132"/>
    </location>
</feature>
<feature type="compositionally biased region" description="Basic and acidic residues" evidence="4">
    <location>
        <begin position="137"/>
        <end position="147"/>
    </location>
</feature>
<feature type="compositionally biased region" description="Low complexity" evidence="4">
    <location>
        <begin position="168"/>
        <end position="185"/>
    </location>
</feature>
<feature type="compositionally biased region" description="Polar residues" evidence="4">
    <location>
        <begin position="186"/>
        <end position="197"/>
    </location>
</feature>
<feature type="sequence conflict" description="In Ref. 1; BAC30535." evidence="5" ref="1">
    <original>I</original>
    <variation>V</variation>
    <location>
        <position position="250"/>
    </location>
</feature>
<comment type="function">
    <text evidence="1">May act as a transcriptional regulator in the myeloid lineage. Inhibits cell growth via p53/TP53 and RB1-dependent and independent pathways (By similarity).</text>
</comment>
<comment type="subcellular location">
    <subcellularLocation>
        <location evidence="1">Nucleus</location>
    </subcellularLocation>
</comment>
<comment type="similarity">
    <text evidence="5">Belongs to the HIN-200 family.</text>
</comment>
<reference key="1">
    <citation type="journal article" date="2005" name="Science">
        <title>The transcriptional landscape of the mammalian genome.</title>
        <authorList>
            <person name="Carninci P."/>
            <person name="Kasukawa T."/>
            <person name="Katayama S."/>
            <person name="Gough J."/>
            <person name="Frith M.C."/>
            <person name="Maeda N."/>
            <person name="Oyama R."/>
            <person name="Ravasi T."/>
            <person name="Lenhard B."/>
            <person name="Wells C."/>
            <person name="Kodzius R."/>
            <person name="Shimokawa K."/>
            <person name="Bajic V.B."/>
            <person name="Brenner S.E."/>
            <person name="Batalov S."/>
            <person name="Forrest A.R."/>
            <person name="Zavolan M."/>
            <person name="Davis M.J."/>
            <person name="Wilming L.G."/>
            <person name="Aidinis V."/>
            <person name="Allen J.E."/>
            <person name="Ambesi-Impiombato A."/>
            <person name="Apweiler R."/>
            <person name="Aturaliya R.N."/>
            <person name="Bailey T.L."/>
            <person name="Bansal M."/>
            <person name="Baxter L."/>
            <person name="Beisel K.W."/>
            <person name="Bersano T."/>
            <person name="Bono H."/>
            <person name="Chalk A.M."/>
            <person name="Chiu K.P."/>
            <person name="Choudhary V."/>
            <person name="Christoffels A."/>
            <person name="Clutterbuck D.R."/>
            <person name="Crowe M.L."/>
            <person name="Dalla E."/>
            <person name="Dalrymple B.P."/>
            <person name="de Bono B."/>
            <person name="Della Gatta G."/>
            <person name="di Bernardo D."/>
            <person name="Down T."/>
            <person name="Engstrom P."/>
            <person name="Fagiolini M."/>
            <person name="Faulkner G."/>
            <person name="Fletcher C.F."/>
            <person name="Fukushima T."/>
            <person name="Furuno M."/>
            <person name="Futaki S."/>
            <person name="Gariboldi M."/>
            <person name="Georgii-Hemming P."/>
            <person name="Gingeras T.R."/>
            <person name="Gojobori T."/>
            <person name="Green R.E."/>
            <person name="Gustincich S."/>
            <person name="Harbers M."/>
            <person name="Hayashi Y."/>
            <person name="Hensch T.K."/>
            <person name="Hirokawa N."/>
            <person name="Hill D."/>
            <person name="Huminiecki L."/>
            <person name="Iacono M."/>
            <person name="Ikeo K."/>
            <person name="Iwama A."/>
            <person name="Ishikawa T."/>
            <person name="Jakt M."/>
            <person name="Kanapin A."/>
            <person name="Katoh M."/>
            <person name="Kawasawa Y."/>
            <person name="Kelso J."/>
            <person name="Kitamura H."/>
            <person name="Kitano H."/>
            <person name="Kollias G."/>
            <person name="Krishnan S.P."/>
            <person name="Kruger A."/>
            <person name="Kummerfeld S.K."/>
            <person name="Kurochkin I.V."/>
            <person name="Lareau L.F."/>
            <person name="Lazarevic D."/>
            <person name="Lipovich L."/>
            <person name="Liu J."/>
            <person name="Liuni S."/>
            <person name="McWilliam S."/>
            <person name="Madan Babu M."/>
            <person name="Madera M."/>
            <person name="Marchionni L."/>
            <person name="Matsuda H."/>
            <person name="Matsuzawa S."/>
            <person name="Miki H."/>
            <person name="Mignone F."/>
            <person name="Miyake S."/>
            <person name="Morris K."/>
            <person name="Mottagui-Tabar S."/>
            <person name="Mulder N."/>
            <person name="Nakano N."/>
            <person name="Nakauchi H."/>
            <person name="Ng P."/>
            <person name="Nilsson R."/>
            <person name="Nishiguchi S."/>
            <person name="Nishikawa S."/>
            <person name="Nori F."/>
            <person name="Ohara O."/>
            <person name="Okazaki Y."/>
            <person name="Orlando V."/>
            <person name="Pang K.C."/>
            <person name="Pavan W.J."/>
            <person name="Pavesi G."/>
            <person name="Pesole G."/>
            <person name="Petrovsky N."/>
            <person name="Piazza S."/>
            <person name="Reed J."/>
            <person name="Reid J.F."/>
            <person name="Ring B.Z."/>
            <person name="Ringwald M."/>
            <person name="Rost B."/>
            <person name="Ruan Y."/>
            <person name="Salzberg S.L."/>
            <person name="Sandelin A."/>
            <person name="Schneider C."/>
            <person name="Schoenbach C."/>
            <person name="Sekiguchi K."/>
            <person name="Semple C.A."/>
            <person name="Seno S."/>
            <person name="Sessa L."/>
            <person name="Sheng Y."/>
            <person name="Shibata Y."/>
            <person name="Shimada H."/>
            <person name="Shimada K."/>
            <person name="Silva D."/>
            <person name="Sinclair B."/>
            <person name="Sperling S."/>
            <person name="Stupka E."/>
            <person name="Sugiura K."/>
            <person name="Sultana R."/>
            <person name="Takenaka Y."/>
            <person name="Taki K."/>
            <person name="Tammoja K."/>
            <person name="Tan S.L."/>
            <person name="Tang S."/>
            <person name="Taylor M.S."/>
            <person name="Tegner J."/>
            <person name="Teichmann S.A."/>
            <person name="Ueda H.R."/>
            <person name="van Nimwegen E."/>
            <person name="Verardo R."/>
            <person name="Wei C.L."/>
            <person name="Yagi K."/>
            <person name="Yamanishi H."/>
            <person name="Zabarovsky E."/>
            <person name="Zhu S."/>
            <person name="Zimmer A."/>
            <person name="Hide W."/>
            <person name="Bult C."/>
            <person name="Grimmond S.M."/>
            <person name="Teasdale R.D."/>
            <person name="Liu E.T."/>
            <person name="Brusic V."/>
            <person name="Quackenbush J."/>
            <person name="Wahlestedt C."/>
            <person name="Mattick J.S."/>
            <person name="Hume D.A."/>
            <person name="Kai C."/>
            <person name="Sasaki D."/>
            <person name="Tomaru Y."/>
            <person name="Fukuda S."/>
            <person name="Kanamori-Katayama M."/>
            <person name="Suzuki M."/>
            <person name="Aoki J."/>
            <person name="Arakawa T."/>
            <person name="Iida J."/>
            <person name="Imamura K."/>
            <person name="Itoh M."/>
            <person name="Kato T."/>
            <person name="Kawaji H."/>
            <person name="Kawagashira N."/>
            <person name="Kawashima T."/>
            <person name="Kojima M."/>
            <person name="Kondo S."/>
            <person name="Konno H."/>
            <person name="Nakano K."/>
            <person name="Ninomiya N."/>
            <person name="Nishio T."/>
            <person name="Okada M."/>
            <person name="Plessy C."/>
            <person name="Shibata K."/>
            <person name="Shiraki T."/>
            <person name="Suzuki S."/>
            <person name="Tagami M."/>
            <person name="Waki K."/>
            <person name="Watahiki A."/>
            <person name="Okamura-Oho Y."/>
            <person name="Suzuki H."/>
            <person name="Kawai J."/>
            <person name="Hayashizaki Y."/>
        </authorList>
    </citation>
    <scope>NUCLEOTIDE SEQUENCE [LARGE SCALE MRNA]</scope>
    <source>
        <strain>C57BL/6J</strain>
        <tissue>Thymus</tissue>
    </source>
</reference>
<reference key="2">
    <citation type="submission" date="2005-07" db="EMBL/GenBank/DDBJ databases">
        <title>Cloning of mouse full open reading frames in Gateway(R) system entry vector (pDONR201).</title>
        <authorList>
            <person name="Ebert L."/>
            <person name="Muenstermann E."/>
            <person name="Schatten R."/>
            <person name="Henze S."/>
            <person name="Bohn E."/>
            <person name="Mollenhauer J."/>
            <person name="Wiemann S."/>
            <person name="Schick M."/>
            <person name="Korn B."/>
        </authorList>
    </citation>
    <scope>NUCLEOTIDE SEQUENCE [LARGE SCALE MRNA]</scope>
</reference>
<reference key="3">
    <citation type="journal article" date="2004" name="Genome Res.">
        <title>The status, quality, and expansion of the NIH full-length cDNA project: the Mammalian Gene Collection (MGC).</title>
        <authorList>
            <consortium name="The MGC Project Team"/>
        </authorList>
    </citation>
    <scope>NUCLEOTIDE SEQUENCE [LARGE SCALE MRNA]</scope>
    <source>
        <tissue>Mammary gland</tissue>
    </source>
</reference>
<reference key="4">
    <citation type="journal article" date="2003" name="Genomics">
        <title>The mouse Ifi200 gene cluster: genomic sequence, analysis, and comparison with the human HIN-200 gene cluster.</title>
        <authorList>
            <person name="Deschamps S."/>
            <person name="Meyer J."/>
            <person name="Chatterjee G."/>
            <person name="Wang H."/>
            <person name="Lengyel P."/>
            <person name="Roe B.A."/>
        </authorList>
    </citation>
    <scope>IDENTIFICATION</scope>
</reference>
<evidence type="ECO:0000250" key="1"/>
<evidence type="ECO:0000255" key="2">
    <source>
        <dbReference type="PROSITE-ProRule" id="PRU00061"/>
    </source>
</evidence>
<evidence type="ECO:0000255" key="3">
    <source>
        <dbReference type="PROSITE-ProRule" id="PRU00106"/>
    </source>
</evidence>
<evidence type="ECO:0000256" key="4">
    <source>
        <dbReference type="SAM" id="MobiDB-lite"/>
    </source>
</evidence>
<evidence type="ECO:0000305" key="5"/>
<accession>Q8CGE8</accession>
<accession>Q8BYE7</accession>
<sequence>MENEYKRLVLLEGLECINKHQFNLFKSLMVKDLNLEEDNQEKYTTFQIANMMVKKFPADAGLDRLINFCERVPTLKKRAEILKKERSEVTEETSLEINRQEASPATPTSTTSHMLASERGKTSTTQEETSTAQKRKGMSEEKTDVKKIKASGKADQPPCCEGPTATCQSPISQVSSSASSNIPSAKNQKSQPQNQNIPRGAVLHSEPLTVMVLTATDPFEYESPEHEVKNMFHATVATVSQYFHVKVFNIDLKEKFTKNNFITISNYFESKGILEINETSSVLEAAPKQMIEVPNCITRNANASPKICDIQKGTSGTVFYGVFTLHKKKVKTQNTSYEIKDGSGSIEVVGSGQWHNINCKEGDKLHLFCFHLKRERGQPKLVCGDHSFVKVTKAGKKKEASTVQ</sequence>
<gene>
    <name type="primary">Ifi205a</name>
    <name type="synonym">Ifi205</name>
</gene>
<proteinExistence type="evidence at transcript level"/>
<dbReference type="EMBL" id="AK040191">
    <property type="protein sequence ID" value="BAC30535.1"/>
    <property type="molecule type" value="mRNA"/>
</dbReference>
<dbReference type="EMBL" id="CT010211">
    <property type="protein sequence ID" value="CAJ18419.1"/>
    <property type="molecule type" value="mRNA"/>
</dbReference>
<dbReference type="EMBL" id="BC040425">
    <property type="protein sequence ID" value="AAH40425.1"/>
    <property type="molecule type" value="mRNA"/>
</dbReference>
<dbReference type="CCDS" id="CCDS15534.1"/>
<dbReference type="RefSeq" id="NP_766236.2">
    <property type="nucleotide sequence ID" value="NM_172648.3"/>
</dbReference>
<dbReference type="SMR" id="Q8CGE8"/>
<dbReference type="FunCoup" id="Q8CGE8">
    <property type="interactions" value="64"/>
</dbReference>
<dbReference type="STRING" id="10090.ENSMUSP00000062409"/>
<dbReference type="GlyGen" id="Q8CGE8">
    <property type="glycosylation" value="2 sites"/>
</dbReference>
<dbReference type="iPTMnet" id="Q8CGE8"/>
<dbReference type="PhosphoSitePlus" id="Q8CGE8"/>
<dbReference type="SwissPalm" id="Q8CGE8"/>
<dbReference type="PaxDb" id="10090-ENSMUSP00000062409"/>
<dbReference type="PeptideAtlas" id="Q8CGE8"/>
<dbReference type="ProteomicsDB" id="266950"/>
<dbReference type="DNASU" id="226695"/>
<dbReference type="Ensembl" id="ENSMUST00000059226.7">
    <property type="protein sequence ID" value="ENSMUSP00000062409.7"/>
    <property type="gene ID" value="ENSMUSG00000054203.8"/>
</dbReference>
<dbReference type="GeneID" id="226695"/>
<dbReference type="KEGG" id="mmu:226695"/>
<dbReference type="UCSC" id="uc007dsm.2">
    <property type="organism name" value="mouse"/>
</dbReference>
<dbReference type="AGR" id="MGI:101847"/>
<dbReference type="CTD" id="226695"/>
<dbReference type="MGI" id="MGI:101847">
    <property type="gene designation" value="Ifi205"/>
</dbReference>
<dbReference type="VEuPathDB" id="HostDB:ENSMUSG00000054203"/>
<dbReference type="eggNOG" id="ENOG502QTQS">
    <property type="taxonomic scope" value="Eukaryota"/>
</dbReference>
<dbReference type="GeneTree" id="ENSGT00390000013296"/>
<dbReference type="HOGENOM" id="CLU_020123_2_0_1"/>
<dbReference type="InParanoid" id="Q8CGE8"/>
<dbReference type="OMA" id="HNIKCEE"/>
<dbReference type="OrthoDB" id="9836166at2759"/>
<dbReference type="PhylomeDB" id="Q8CGE8"/>
<dbReference type="TreeFam" id="TF337385"/>
<dbReference type="Reactome" id="R-MMU-6798695">
    <property type="pathway name" value="Neutrophil degranulation"/>
</dbReference>
<dbReference type="BioGRID-ORCS" id="226695">
    <property type="hits" value="2 hits in 78 CRISPR screens"/>
</dbReference>
<dbReference type="ChiTaRS" id="Ifi205">
    <property type="organism name" value="mouse"/>
</dbReference>
<dbReference type="PRO" id="PR:Q8CGE8"/>
<dbReference type="Proteomes" id="UP000000589">
    <property type="component" value="Chromosome 1"/>
</dbReference>
<dbReference type="RNAct" id="Q8CGE8">
    <property type="molecule type" value="protein"/>
</dbReference>
<dbReference type="Bgee" id="ENSMUSG00000054203">
    <property type="expression patterns" value="Expressed in zone of skin and 58 other cell types or tissues"/>
</dbReference>
<dbReference type="GO" id="GO:0005634">
    <property type="term" value="C:nucleus"/>
    <property type="evidence" value="ECO:0007669"/>
    <property type="project" value="UniProtKB-SubCell"/>
</dbReference>
<dbReference type="GO" id="GO:0003690">
    <property type="term" value="F:double-stranded DNA binding"/>
    <property type="evidence" value="ECO:0000314"/>
    <property type="project" value="MGI"/>
</dbReference>
<dbReference type="GO" id="GO:0002218">
    <property type="term" value="P:activation of innate immune response"/>
    <property type="evidence" value="ECO:0007669"/>
    <property type="project" value="InterPro"/>
</dbReference>
<dbReference type="GO" id="GO:0035458">
    <property type="term" value="P:cellular response to interferon-beta"/>
    <property type="evidence" value="ECO:0000314"/>
    <property type="project" value="MGI"/>
</dbReference>
<dbReference type="GO" id="GO:0009617">
    <property type="term" value="P:response to bacterium"/>
    <property type="evidence" value="ECO:0000270"/>
    <property type="project" value="MGI"/>
</dbReference>
<dbReference type="CDD" id="cd08305">
    <property type="entry name" value="Pyrin"/>
    <property type="match status" value="1"/>
</dbReference>
<dbReference type="FunFam" id="2.40.50.140:FF:000101">
    <property type="entry name" value="Myeloid cell nuclear differentiation antigen"/>
    <property type="match status" value="1"/>
</dbReference>
<dbReference type="FunFam" id="2.40.50.140:FF:000105">
    <property type="entry name" value="Myeloid cell nuclear differentiation antigen"/>
    <property type="match status" value="1"/>
</dbReference>
<dbReference type="Gene3D" id="1.10.533.10">
    <property type="entry name" value="Death Domain, Fas"/>
    <property type="match status" value="1"/>
</dbReference>
<dbReference type="Gene3D" id="2.40.50.140">
    <property type="entry name" value="Nucleic acid-binding proteins"/>
    <property type="match status" value="2"/>
</dbReference>
<dbReference type="InterPro" id="IPR004020">
    <property type="entry name" value="DAPIN"/>
</dbReference>
<dbReference type="InterPro" id="IPR011029">
    <property type="entry name" value="DEATH-like_dom_sf"/>
</dbReference>
<dbReference type="InterPro" id="IPR040205">
    <property type="entry name" value="HIN-200"/>
</dbReference>
<dbReference type="InterPro" id="IPR004021">
    <property type="entry name" value="HIN200/IF120x"/>
</dbReference>
<dbReference type="InterPro" id="IPR012340">
    <property type="entry name" value="NA-bd_OB-fold"/>
</dbReference>
<dbReference type="PANTHER" id="PTHR12200">
    <property type="entry name" value="INTERFERON-INDUCIBLE PROTEIN AIM2 FAMILY MEMBER"/>
    <property type="match status" value="1"/>
</dbReference>
<dbReference type="PANTHER" id="PTHR12200:SF25">
    <property type="entry name" value="PYRIN AND HIN DOMAIN-CONTAINING PROTEIN 1"/>
    <property type="match status" value="1"/>
</dbReference>
<dbReference type="Pfam" id="PF02760">
    <property type="entry name" value="HIN"/>
    <property type="match status" value="1"/>
</dbReference>
<dbReference type="Pfam" id="PF02758">
    <property type="entry name" value="PYRIN"/>
    <property type="match status" value="1"/>
</dbReference>
<dbReference type="SMART" id="SM01289">
    <property type="entry name" value="PYRIN"/>
    <property type="match status" value="1"/>
</dbReference>
<dbReference type="SUPFAM" id="SSF159141">
    <property type="entry name" value="HIN-2000 domain-like"/>
    <property type="match status" value="2"/>
</dbReference>
<dbReference type="PROSITE" id="PS50824">
    <property type="entry name" value="DAPIN"/>
    <property type="match status" value="1"/>
</dbReference>
<dbReference type="PROSITE" id="PS50834">
    <property type="entry name" value="HIN_200"/>
    <property type="match status" value="1"/>
</dbReference>
<keyword id="KW-0539">Nucleus</keyword>
<keyword id="KW-1185">Reference proteome</keyword>
<keyword id="KW-0804">Transcription</keyword>
<keyword id="KW-0805">Transcription regulation</keyword>
<protein>
    <recommendedName>
        <fullName>Interferon-activable protein 205-A</fullName>
        <shortName>Ifi-205-A</shortName>
    </recommendedName>
    <alternativeName>
        <fullName>Interferon-inducible protein p205-A</fullName>
    </alternativeName>
    <alternativeName>
        <fullName>Protein D3'</fullName>
    </alternativeName>
</protein>